<comment type="function">
    <text evidence="1">This enzyme is involved in nucleotide metabolism: it produces dUMP, the immediate precursor of thymidine nucleotides and it decreases the intracellular concentration of dUTP so that uracil cannot be incorporated into DNA.</text>
</comment>
<comment type="catalytic activity">
    <reaction evidence="1">
        <text>dUTP + H2O = dUMP + diphosphate + H(+)</text>
        <dbReference type="Rhea" id="RHEA:10248"/>
        <dbReference type="ChEBI" id="CHEBI:15377"/>
        <dbReference type="ChEBI" id="CHEBI:15378"/>
        <dbReference type="ChEBI" id="CHEBI:33019"/>
        <dbReference type="ChEBI" id="CHEBI:61555"/>
        <dbReference type="ChEBI" id="CHEBI:246422"/>
        <dbReference type="EC" id="3.6.1.23"/>
    </reaction>
</comment>
<comment type="cofactor">
    <cofactor evidence="1">
        <name>Mg(2+)</name>
        <dbReference type="ChEBI" id="CHEBI:18420"/>
    </cofactor>
</comment>
<comment type="pathway">
    <text evidence="1">Pyrimidine metabolism; dUMP biosynthesis; dUMP from dCTP (dUTP route): step 2/2.</text>
</comment>
<comment type="subunit">
    <text evidence="1">Homotrimer.</text>
</comment>
<comment type="similarity">
    <text evidence="1">Belongs to the dUTPase family.</text>
</comment>
<sequence length="152" mass="16288">MMKKIDVKILDPRVGKEFPLPTYATSGSAGLDLRACLDDAVELAPGDTTLVPTGLAIHIADPSLAAMMLPRSGLGHKHGIVLGNLVGLIDSDYQGQLMISVWNRGQDSFTIQPGERIAQMIFVPVVQAEFNLVEDFDATDRGEGGFGHSGRQ</sequence>
<feature type="chain" id="PRO_1000094960" description="Deoxyuridine 5'-triphosphate nucleotidohydrolase">
    <location>
        <begin position="1"/>
        <end position="152"/>
    </location>
</feature>
<feature type="binding site" evidence="1">
    <location>
        <begin position="71"/>
        <end position="73"/>
    </location>
    <ligand>
        <name>substrate</name>
    </ligand>
</feature>
<feature type="binding site" evidence="1">
    <location>
        <position position="84"/>
    </location>
    <ligand>
        <name>substrate</name>
    </ligand>
</feature>
<feature type="binding site" evidence="1">
    <location>
        <begin position="88"/>
        <end position="90"/>
    </location>
    <ligand>
        <name>substrate</name>
    </ligand>
</feature>
<feature type="binding site" evidence="1">
    <location>
        <position position="98"/>
    </location>
    <ligand>
        <name>substrate</name>
    </ligand>
</feature>
<dbReference type="EC" id="3.6.1.23" evidence="1"/>
<dbReference type="EMBL" id="CP000247">
    <property type="protein sequence ID" value="ABG71710.1"/>
    <property type="molecule type" value="Genomic_DNA"/>
</dbReference>
<dbReference type="RefSeq" id="WP_000976070.1">
    <property type="nucleotide sequence ID" value="NC_008253.1"/>
</dbReference>
<dbReference type="SMR" id="Q0TBG9"/>
<dbReference type="GeneID" id="93778355"/>
<dbReference type="KEGG" id="ecp:ECP_3738"/>
<dbReference type="HOGENOM" id="CLU_068508_1_1_6"/>
<dbReference type="UniPathway" id="UPA00610">
    <property type="reaction ID" value="UER00666"/>
</dbReference>
<dbReference type="Proteomes" id="UP000009182">
    <property type="component" value="Chromosome"/>
</dbReference>
<dbReference type="GO" id="GO:0004170">
    <property type="term" value="F:dUTP diphosphatase activity"/>
    <property type="evidence" value="ECO:0007669"/>
    <property type="project" value="UniProtKB-UniRule"/>
</dbReference>
<dbReference type="GO" id="GO:0000287">
    <property type="term" value="F:magnesium ion binding"/>
    <property type="evidence" value="ECO:0007669"/>
    <property type="project" value="UniProtKB-UniRule"/>
</dbReference>
<dbReference type="GO" id="GO:0006226">
    <property type="term" value="P:dUMP biosynthetic process"/>
    <property type="evidence" value="ECO:0007669"/>
    <property type="project" value="UniProtKB-UniRule"/>
</dbReference>
<dbReference type="GO" id="GO:0046081">
    <property type="term" value="P:dUTP catabolic process"/>
    <property type="evidence" value="ECO:0007669"/>
    <property type="project" value="InterPro"/>
</dbReference>
<dbReference type="CDD" id="cd07557">
    <property type="entry name" value="trimeric_dUTPase"/>
    <property type="match status" value="1"/>
</dbReference>
<dbReference type="FunFam" id="2.70.40.10:FF:000002">
    <property type="entry name" value="dUTP diphosphatase"/>
    <property type="match status" value="1"/>
</dbReference>
<dbReference type="Gene3D" id="2.70.40.10">
    <property type="match status" value="1"/>
</dbReference>
<dbReference type="HAMAP" id="MF_00116">
    <property type="entry name" value="dUTPase_bact"/>
    <property type="match status" value="1"/>
</dbReference>
<dbReference type="InterPro" id="IPR008181">
    <property type="entry name" value="dUTPase"/>
</dbReference>
<dbReference type="InterPro" id="IPR029054">
    <property type="entry name" value="dUTPase-like"/>
</dbReference>
<dbReference type="InterPro" id="IPR036157">
    <property type="entry name" value="dUTPase-like_sf"/>
</dbReference>
<dbReference type="InterPro" id="IPR033704">
    <property type="entry name" value="dUTPase_trimeric"/>
</dbReference>
<dbReference type="NCBIfam" id="TIGR00576">
    <property type="entry name" value="dut"/>
    <property type="match status" value="1"/>
</dbReference>
<dbReference type="NCBIfam" id="NF001862">
    <property type="entry name" value="PRK00601.1"/>
    <property type="match status" value="1"/>
</dbReference>
<dbReference type="PANTHER" id="PTHR11241">
    <property type="entry name" value="DEOXYURIDINE 5'-TRIPHOSPHATE NUCLEOTIDOHYDROLASE"/>
    <property type="match status" value="1"/>
</dbReference>
<dbReference type="PANTHER" id="PTHR11241:SF0">
    <property type="entry name" value="DEOXYURIDINE 5'-TRIPHOSPHATE NUCLEOTIDOHYDROLASE"/>
    <property type="match status" value="1"/>
</dbReference>
<dbReference type="Pfam" id="PF00692">
    <property type="entry name" value="dUTPase"/>
    <property type="match status" value="1"/>
</dbReference>
<dbReference type="SUPFAM" id="SSF51283">
    <property type="entry name" value="dUTPase-like"/>
    <property type="match status" value="1"/>
</dbReference>
<evidence type="ECO:0000255" key="1">
    <source>
        <dbReference type="HAMAP-Rule" id="MF_00116"/>
    </source>
</evidence>
<protein>
    <recommendedName>
        <fullName evidence="1">Deoxyuridine 5'-triphosphate nucleotidohydrolase</fullName>
        <shortName evidence="1">dUTPase</shortName>
        <ecNumber evidence="1">3.6.1.23</ecNumber>
    </recommendedName>
    <alternativeName>
        <fullName evidence="1">dUTP pyrophosphatase</fullName>
    </alternativeName>
</protein>
<accession>Q0TBG9</accession>
<organism>
    <name type="scientific">Escherichia coli O6:K15:H31 (strain 536 / UPEC)</name>
    <dbReference type="NCBI Taxonomy" id="362663"/>
    <lineage>
        <taxon>Bacteria</taxon>
        <taxon>Pseudomonadati</taxon>
        <taxon>Pseudomonadota</taxon>
        <taxon>Gammaproteobacteria</taxon>
        <taxon>Enterobacterales</taxon>
        <taxon>Enterobacteriaceae</taxon>
        <taxon>Escherichia</taxon>
    </lineage>
</organism>
<gene>
    <name evidence="1" type="primary">dut</name>
    <name type="ordered locus">ECP_3738</name>
</gene>
<name>DUT_ECOL5</name>
<proteinExistence type="inferred from homology"/>
<keyword id="KW-0378">Hydrolase</keyword>
<keyword id="KW-0460">Magnesium</keyword>
<keyword id="KW-0479">Metal-binding</keyword>
<keyword id="KW-0546">Nucleotide metabolism</keyword>
<reference key="1">
    <citation type="journal article" date="2006" name="Mol. Microbiol.">
        <title>Role of pathogenicity island-associated integrases in the genome plasticity of uropathogenic Escherichia coli strain 536.</title>
        <authorList>
            <person name="Hochhut B."/>
            <person name="Wilde C."/>
            <person name="Balling G."/>
            <person name="Middendorf B."/>
            <person name="Dobrindt U."/>
            <person name="Brzuszkiewicz E."/>
            <person name="Gottschalk G."/>
            <person name="Carniel E."/>
            <person name="Hacker J."/>
        </authorList>
    </citation>
    <scope>NUCLEOTIDE SEQUENCE [LARGE SCALE GENOMIC DNA]</scope>
    <source>
        <strain>536 / UPEC</strain>
    </source>
</reference>